<reference key="1">
    <citation type="journal article" date="2002" name="Proc. Natl. Acad. Sci. U.S.A.">
        <title>The genome sequence of the facultative intracellular pathogen Brucella melitensis.</title>
        <authorList>
            <person name="DelVecchio V.G."/>
            <person name="Kapatral V."/>
            <person name="Redkar R.J."/>
            <person name="Patra G."/>
            <person name="Mujer C."/>
            <person name="Los T."/>
            <person name="Ivanova N."/>
            <person name="Anderson I."/>
            <person name="Bhattacharyya A."/>
            <person name="Lykidis A."/>
            <person name="Reznik G."/>
            <person name="Jablonski L."/>
            <person name="Larsen N."/>
            <person name="D'Souza M."/>
            <person name="Bernal A."/>
            <person name="Mazur M."/>
            <person name="Goltsman E."/>
            <person name="Selkov E."/>
            <person name="Elzer P.H."/>
            <person name="Hagius S."/>
            <person name="O'Callaghan D."/>
            <person name="Letesson J.-J."/>
            <person name="Haselkorn R."/>
            <person name="Kyrpides N.C."/>
            <person name="Overbeek R."/>
        </authorList>
    </citation>
    <scope>NUCLEOTIDE SEQUENCE [LARGE SCALE GENOMIC DNA]</scope>
    <source>
        <strain>ATCC 23456 / CCUG 17765 / NCTC 10094 / 16M</strain>
    </source>
</reference>
<protein>
    <recommendedName>
        <fullName evidence="1">Nickel import ATP-binding protein NikE</fullName>
        <ecNumber evidence="1">7.2.2.11</ecNumber>
    </recommendedName>
</protein>
<proteinExistence type="inferred from homology"/>
<organism>
    <name type="scientific">Brucella melitensis biotype 1 (strain ATCC 23456 / CCUG 17765 / NCTC 10094 / 16M)</name>
    <dbReference type="NCBI Taxonomy" id="224914"/>
    <lineage>
        <taxon>Bacteria</taxon>
        <taxon>Pseudomonadati</taxon>
        <taxon>Pseudomonadota</taxon>
        <taxon>Alphaproteobacteria</taxon>
        <taxon>Hyphomicrobiales</taxon>
        <taxon>Brucellaceae</taxon>
        <taxon>Brucella/Ochrobactrum group</taxon>
        <taxon>Brucella</taxon>
    </lineage>
</organism>
<sequence>MSLISADNIVKIYQSHSLVGASARKTMLHDISISIGQGETVALLGRSGCGKSTLARLLVGLERPTSGEVRFRGVPLTKLDRSGMKAFRREVQLIFQDSPGAVNARSSVRAIIGEPLRHLTSLDETRREERIQELLRLVELPPEIADRLPAQVSGGQLQRICIARALAVNPKLIILDEAVSNLDIHLQASALALLTKLQQEGGIAYLFVTHDLRLVQKFAARCLVMDEGQIVEEIKTADLDSMRHPASRLLREAVLPPLPVRAVETN</sequence>
<feature type="chain" id="PRO_0000092625" description="Nickel import ATP-binding protein NikE">
    <location>
        <begin position="1"/>
        <end position="266"/>
    </location>
</feature>
<feature type="domain" description="ABC transporter" evidence="1">
    <location>
        <begin position="4"/>
        <end position="252"/>
    </location>
</feature>
<feature type="binding site" evidence="1">
    <location>
        <begin position="45"/>
        <end position="52"/>
    </location>
    <ligand>
        <name>ATP</name>
        <dbReference type="ChEBI" id="CHEBI:30616"/>
    </ligand>
</feature>
<name>NIKE_BRUME</name>
<dbReference type="EC" id="7.2.2.11" evidence="1"/>
<dbReference type="EMBL" id="AE008918">
    <property type="protein sequence ID" value="AAL53733.1"/>
    <property type="molecule type" value="Genomic_DNA"/>
</dbReference>
<dbReference type="PIR" id="AB3571">
    <property type="entry name" value="AB3571"/>
</dbReference>
<dbReference type="RefSeq" id="WP_002965842.1">
    <property type="nucleotide sequence ID" value="NZ_GG703779.1"/>
</dbReference>
<dbReference type="SMR" id="Q8YCN7"/>
<dbReference type="GeneID" id="93015643"/>
<dbReference type="KEGG" id="bme:BMEII0491"/>
<dbReference type="KEGG" id="bmel:DK63_2751"/>
<dbReference type="PATRIC" id="fig|224914.52.peg.2881"/>
<dbReference type="eggNOG" id="COG1124">
    <property type="taxonomic scope" value="Bacteria"/>
</dbReference>
<dbReference type="PhylomeDB" id="Q8YCN7"/>
<dbReference type="Proteomes" id="UP000000419">
    <property type="component" value="Chromosome II"/>
</dbReference>
<dbReference type="GO" id="GO:0005886">
    <property type="term" value="C:plasma membrane"/>
    <property type="evidence" value="ECO:0007669"/>
    <property type="project" value="UniProtKB-SubCell"/>
</dbReference>
<dbReference type="GO" id="GO:0015413">
    <property type="term" value="F:ABC-type nickel transporter activity"/>
    <property type="evidence" value="ECO:0007669"/>
    <property type="project" value="UniProtKB-EC"/>
</dbReference>
<dbReference type="GO" id="GO:0005524">
    <property type="term" value="F:ATP binding"/>
    <property type="evidence" value="ECO:0007669"/>
    <property type="project" value="UniProtKB-KW"/>
</dbReference>
<dbReference type="GO" id="GO:0016887">
    <property type="term" value="F:ATP hydrolysis activity"/>
    <property type="evidence" value="ECO:0007669"/>
    <property type="project" value="InterPro"/>
</dbReference>
<dbReference type="GO" id="GO:0016151">
    <property type="term" value="F:nickel cation binding"/>
    <property type="evidence" value="ECO:0007669"/>
    <property type="project" value="InterPro"/>
</dbReference>
<dbReference type="CDD" id="cd03257">
    <property type="entry name" value="ABC_NikE_OppD_transporters"/>
    <property type="match status" value="1"/>
</dbReference>
<dbReference type="Gene3D" id="3.40.50.300">
    <property type="entry name" value="P-loop containing nucleotide triphosphate hydrolases"/>
    <property type="match status" value="1"/>
</dbReference>
<dbReference type="InterPro" id="IPR003593">
    <property type="entry name" value="AAA+_ATPase"/>
</dbReference>
<dbReference type="InterPro" id="IPR050319">
    <property type="entry name" value="ABC_transp_ATP-bind"/>
</dbReference>
<dbReference type="InterPro" id="IPR003439">
    <property type="entry name" value="ABC_transporter-like_ATP-bd"/>
</dbReference>
<dbReference type="InterPro" id="IPR017871">
    <property type="entry name" value="ABC_transporter-like_CS"/>
</dbReference>
<dbReference type="InterPro" id="IPR014137">
    <property type="entry name" value="Nickel_NikE"/>
</dbReference>
<dbReference type="InterPro" id="IPR027417">
    <property type="entry name" value="P-loop_NTPase"/>
</dbReference>
<dbReference type="NCBIfam" id="TIGR02769">
    <property type="entry name" value="nickel_nikE"/>
    <property type="match status" value="1"/>
</dbReference>
<dbReference type="NCBIfam" id="NF007739">
    <property type="entry name" value="PRK10419.1"/>
    <property type="match status" value="1"/>
</dbReference>
<dbReference type="PANTHER" id="PTHR43776:SF7">
    <property type="entry name" value="D,D-DIPEPTIDE TRANSPORT ATP-BINDING PROTEIN DDPF-RELATED"/>
    <property type="match status" value="1"/>
</dbReference>
<dbReference type="PANTHER" id="PTHR43776">
    <property type="entry name" value="TRANSPORT ATP-BINDING PROTEIN"/>
    <property type="match status" value="1"/>
</dbReference>
<dbReference type="Pfam" id="PF00005">
    <property type="entry name" value="ABC_tran"/>
    <property type="match status" value="1"/>
</dbReference>
<dbReference type="SMART" id="SM00382">
    <property type="entry name" value="AAA"/>
    <property type="match status" value="1"/>
</dbReference>
<dbReference type="SUPFAM" id="SSF52540">
    <property type="entry name" value="P-loop containing nucleoside triphosphate hydrolases"/>
    <property type="match status" value="1"/>
</dbReference>
<dbReference type="PROSITE" id="PS00211">
    <property type="entry name" value="ABC_TRANSPORTER_1"/>
    <property type="match status" value="1"/>
</dbReference>
<dbReference type="PROSITE" id="PS50893">
    <property type="entry name" value="ABC_TRANSPORTER_2"/>
    <property type="match status" value="1"/>
</dbReference>
<dbReference type="PROSITE" id="PS51248">
    <property type="entry name" value="NIKE"/>
    <property type="match status" value="1"/>
</dbReference>
<gene>
    <name evidence="1" type="primary">nikE</name>
    <name type="ordered locus">BMEII0491</name>
</gene>
<evidence type="ECO:0000255" key="1">
    <source>
        <dbReference type="HAMAP-Rule" id="MF_01712"/>
    </source>
</evidence>
<accession>Q8YCN7</accession>
<comment type="function">
    <text evidence="1">Part of the ABC transporter complex NikABCDE involved in nickel import. Responsible for energy coupling to the transport system.</text>
</comment>
<comment type="catalytic activity">
    <reaction evidence="1">
        <text>Ni(2+)(out) + ATP + H2O = Ni(2+)(in) + ADP + phosphate + H(+)</text>
        <dbReference type="Rhea" id="RHEA:15557"/>
        <dbReference type="ChEBI" id="CHEBI:15377"/>
        <dbReference type="ChEBI" id="CHEBI:15378"/>
        <dbReference type="ChEBI" id="CHEBI:30616"/>
        <dbReference type="ChEBI" id="CHEBI:43474"/>
        <dbReference type="ChEBI" id="CHEBI:49786"/>
        <dbReference type="ChEBI" id="CHEBI:456216"/>
        <dbReference type="EC" id="7.2.2.11"/>
    </reaction>
</comment>
<comment type="subunit">
    <text evidence="1">The complex is composed of two ATP-binding proteins (NikD and NikE), two transmembrane proteins (NikB and NikC) and a solute-binding protein (NikA).</text>
</comment>
<comment type="subcellular location">
    <subcellularLocation>
        <location evidence="1">Cell inner membrane</location>
        <topology evidence="1">Peripheral membrane protein</topology>
    </subcellularLocation>
</comment>
<comment type="similarity">
    <text evidence="1">Belongs to the ABC transporter superfamily. Nickel importer (TC 3.A.1.5.3) family.</text>
</comment>
<keyword id="KW-0067">ATP-binding</keyword>
<keyword id="KW-0997">Cell inner membrane</keyword>
<keyword id="KW-1003">Cell membrane</keyword>
<keyword id="KW-0406">Ion transport</keyword>
<keyword id="KW-0472">Membrane</keyword>
<keyword id="KW-0533">Nickel</keyword>
<keyword id="KW-0921">Nickel transport</keyword>
<keyword id="KW-0547">Nucleotide-binding</keyword>
<keyword id="KW-1278">Translocase</keyword>
<keyword id="KW-0813">Transport</keyword>